<gene>
    <name evidence="2" type="primary">deoD</name>
    <name type="ordered locus">SPJ_0773</name>
</gene>
<feature type="chain" id="PRO_1000186238" description="Purine nucleoside phosphorylase DeoD-type">
    <location>
        <begin position="1"/>
        <end position="236"/>
    </location>
</feature>
<feature type="active site" description="Proton donor" evidence="2">
    <location>
        <position position="204"/>
    </location>
</feature>
<feature type="binding site" evidence="1">
    <location>
        <position position="4"/>
    </location>
    <ligand>
        <name>a purine D-ribonucleoside</name>
        <dbReference type="ChEBI" id="CHEBI:142355"/>
        <note>ligand shared between dimeric partners</note>
    </ligand>
</feature>
<feature type="binding site" description="in other chain" evidence="1">
    <location>
        <position position="20"/>
    </location>
    <ligand>
        <name>phosphate</name>
        <dbReference type="ChEBI" id="CHEBI:43474"/>
        <note>ligand shared between dimeric partners</note>
    </ligand>
</feature>
<feature type="binding site" description="in other chain" evidence="1">
    <location>
        <position position="24"/>
    </location>
    <ligand>
        <name>phosphate</name>
        <dbReference type="ChEBI" id="CHEBI:43474"/>
        <note>ligand shared between dimeric partners</note>
    </ligand>
</feature>
<feature type="binding site" evidence="1">
    <location>
        <position position="43"/>
    </location>
    <ligand>
        <name>phosphate</name>
        <dbReference type="ChEBI" id="CHEBI:43474"/>
        <note>ligand shared between dimeric partners</note>
    </ligand>
</feature>
<feature type="binding site" description="in other chain" evidence="1">
    <location>
        <begin position="87"/>
        <end position="90"/>
    </location>
    <ligand>
        <name>phosphate</name>
        <dbReference type="ChEBI" id="CHEBI:43474"/>
        <note>ligand shared between dimeric partners</note>
    </ligand>
</feature>
<feature type="binding site" description="in other chain" evidence="1">
    <location>
        <begin position="179"/>
        <end position="181"/>
    </location>
    <ligand>
        <name>a purine D-ribonucleoside</name>
        <dbReference type="ChEBI" id="CHEBI:142355"/>
        <note>ligand shared between dimeric partners</note>
    </ligand>
</feature>
<feature type="binding site" description="in other chain" evidence="1">
    <location>
        <begin position="203"/>
        <end position="204"/>
    </location>
    <ligand>
        <name>a purine D-ribonucleoside</name>
        <dbReference type="ChEBI" id="CHEBI:142355"/>
        <note>ligand shared between dimeric partners</note>
    </ligand>
</feature>
<feature type="site" description="Important for catalytic activity" evidence="2">
    <location>
        <position position="218"/>
    </location>
</feature>
<name>DEOD_STRZJ</name>
<organism>
    <name type="scientific">Streptococcus pneumoniae (strain JJA)</name>
    <dbReference type="NCBI Taxonomy" id="488222"/>
    <lineage>
        <taxon>Bacteria</taxon>
        <taxon>Bacillati</taxon>
        <taxon>Bacillota</taxon>
        <taxon>Bacilli</taxon>
        <taxon>Lactobacillales</taxon>
        <taxon>Streptococcaceae</taxon>
        <taxon>Streptococcus</taxon>
    </lineage>
</organism>
<sequence>MSIHIAAQQGEIADKILLPGDPLRAKFIAENFLDDAVCFNEVRNMFGYTGTYKGHRVSVMGTGMGMPSISIYARELIVDYGVKKLIRVGTAGSLNEEVHVRELVLAQAAATNSNIVRNDWPQYDFPQIASFDLLDKAYHIAKELGMTTHVGNVLSSDVFYSNYFEKNIELGKWGVKAVEMEAAALYYLAAQYHVDALAIMTISDSLVNPDEDTTAEERQNTFTDMMKVGLETLIAE</sequence>
<evidence type="ECO:0000250" key="1">
    <source>
        <dbReference type="UniProtKB" id="P50389"/>
    </source>
</evidence>
<evidence type="ECO:0000255" key="2">
    <source>
        <dbReference type="HAMAP-Rule" id="MF_01627"/>
    </source>
</evidence>
<accession>C1CDI3</accession>
<dbReference type="EC" id="2.4.2.1" evidence="2"/>
<dbReference type="EMBL" id="CP000919">
    <property type="protein sequence ID" value="ACO19385.1"/>
    <property type="molecule type" value="Genomic_DNA"/>
</dbReference>
<dbReference type="RefSeq" id="WP_000022086.1">
    <property type="nucleotide sequence ID" value="NC_012466.1"/>
</dbReference>
<dbReference type="SMR" id="C1CDI3"/>
<dbReference type="KEGG" id="sjj:SPJ_0773"/>
<dbReference type="HOGENOM" id="CLU_068457_2_0_9"/>
<dbReference type="Proteomes" id="UP000002206">
    <property type="component" value="Chromosome"/>
</dbReference>
<dbReference type="GO" id="GO:0005829">
    <property type="term" value="C:cytosol"/>
    <property type="evidence" value="ECO:0007669"/>
    <property type="project" value="TreeGrafter"/>
</dbReference>
<dbReference type="GO" id="GO:0004731">
    <property type="term" value="F:purine-nucleoside phosphorylase activity"/>
    <property type="evidence" value="ECO:0007669"/>
    <property type="project" value="UniProtKB-UniRule"/>
</dbReference>
<dbReference type="GO" id="GO:0006152">
    <property type="term" value="P:purine nucleoside catabolic process"/>
    <property type="evidence" value="ECO:0007669"/>
    <property type="project" value="TreeGrafter"/>
</dbReference>
<dbReference type="CDD" id="cd09006">
    <property type="entry name" value="PNP_EcPNPI-like"/>
    <property type="match status" value="1"/>
</dbReference>
<dbReference type="Gene3D" id="3.40.50.1580">
    <property type="entry name" value="Nucleoside phosphorylase domain"/>
    <property type="match status" value="1"/>
</dbReference>
<dbReference type="HAMAP" id="MF_01627">
    <property type="entry name" value="Pur_nucleosid_phosp"/>
    <property type="match status" value="1"/>
</dbReference>
<dbReference type="InterPro" id="IPR004402">
    <property type="entry name" value="DeoD-type"/>
</dbReference>
<dbReference type="InterPro" id="IPR018016">
    <property type="entry name" value="Nucleoside_phosphorylase_CS"/>
</dbReference>
<dbReference type="InterPro" id="IPR000845">
    <property type="entry name" value="Nucleoside_phosphorylase_d"/>
</dbReference>
<dbReference type="InterPro" id="IPR035994">
    <property type="entry name" value="Nucleoside_phosphorylase_sf"/>
</dbReference>
<dbReference type="NCBIfam" id="TIGR00107">
    <property type="entry name" value="deoD"/>
    <property type="match status" value="1"/>
</dbReference>
<dbReference type="NCBIfam" id="NF004489">
    <property type="entry name" value="PRK05819.1"/>
    <property type="match status" value="1"/>
</dbReference>
<dbReference type="PANTHER" id="PTHR43691:SF11">
    <property type="entry name" value="FI09636P-RELATED"/>
    <property type="match status" value="1"/>
</dbReference>
<dbReference type="PANTHER" id="PTHR43691">
    <property type="entry name" value="URIDINE PHOSPHORYLASE"/>
    <property type="match status" value="1"/>
</dbReference>
<dbReference type="Pfam" id="PF01048">
    <property type="entry name" value="PNP_UDP_1"/>
    <property type="match status" value="1"/>
</dbReference>
<dbReference type="SUPFAM" id="SSF53167">
    <property type="entry name" value="Purine and uridine phosphorylases"/>
    <property type="match status" value="1"/>
</dbReference>
<dbReference type="PROSITE" id="PS01232">
    <property type="entry name" value="PNP_UDP_1"/>
    <property type="match status" value="1"/>
</dbReference>
<reference key="1">
    <citation type="journal article" date="2010" name="Genome Biol.">
        <title>Structure and dynamics of the pan-genome of Streptococcus pneumoniae and closely related species.</title>
        <authorList>
            <person name="Donati C."/>
            <person name="Hiller N.L."/>
            <person name="Tettelin H."/>
            <person name="Muzzi A."/>
            <person name="Croucher N.J."/>
            <person name="Angiuoli S.V."/>
            <person name="Oggioni M."/>
            <person name="Dunning Hotopp J.C."/>
            <person name="Hu F.Z."/>
            <person name="Riley D.R."/>
            <person name="Covacci A."/>
            <person name="Mitchell T.J."/>
            <person name="Bentley S.D."/>
            <person name="Kilian M."/>
            <person name="Ehrlich G.D."/>
            <person name="Rappuoli R."/>
            <person name="Moxon E.R."/>
            <person name="Masignani V."/>
        </authorList>
    </citation>
    <scope>NUCLEOTIDE SEQUENCE [LARGE SCALE GENOMIC DNA]</scope>
    <source>
        <strain>JJA</strain>
    </source>
</reference>
<keyword id="KW-0328">Glycosyltransferase</keyword>
<keyword id="KW-0808">Transferase</keyword>
<comment type="function">
    <text evidence="2">Catalyzes the reversible phosphorolytic breakdown of the N-glycosidic bond in the beta-(deoxy)ribonucleoside molecules, with the formation of the corresponding free purine bases and pentose-1-phosphate.</text>
</comment>
<comment type="catalytic activity">
    <reaction evidence="2">
        <text>a purine D-ribonucleoside + phosphate = a purine nucleobase + alpha-D-ribose 1-phosphate</text>
        <dbReference type="Rhea" id="RHEA:19805"/>
        <dbReference type="ChEBI" id="CHEBI:26386"/>
        <dbReference type="ChEBI" id="CHEBI:43474"/>
        <dbReference type="ChEBI" id="CHEBI:57720"/>
        <dbReference type="ChEBI" id="CHEBI:142355"/>
        <dbReference type="EC" id="2.4.2.1"/>
    </reaction>
</comment>
<comment type="catalytic activity">
    <reaction evidence="2">
        <text>a purine 2'-deoxy-D-ribonucleoside + phosphate = a purine nucleobase + 2-deoxy-alpha-D-ribose 1-phosphate</text>
        <dbReference type="Rhea" id="RHEA:36431"/>
        <dbReference type="ChEBI" id="CHEBI:26386"/>
        <dbReference type="ChEBI" id="CHEBI:43474"/>
        <dbReference type="ChEBI" id="CHEBI:57259"/>
        <dbReference type="ChEBI" id="CHEBI:142361"/>
        <dbReference type="EC" id="2.4.2.1"/>
    </reaction>
</comment>
<comment type="subunit">
    <text evidence="2">Homohexamer; trimer of homodimers.</text>
</comment>
<comment type="similarity">
    <text evidence="2">Belongs to the PNP/UDP phosphorylase family.</text>
</comment>
<protein>
    <recommendedName>
        <fullName evidence="2">Purine nucleoside phosphorylase DeoD-type</fullName>
        <shortName evidence="2">PNP</shortName>
        <ecNumber evidence="2">2.4.2.1</ecNumber>
    </recommendedName>
</protein>
<proteinExistence type="inferred from homology"/>